<evidence type="ECO:0000255" key="1">
    <source>
        <dbReference type="HAMAP-Rule" id="MF_00115"/>
    </source>
</evidence>
<comment type="function">
    <text evidence="1">Channel that opens in response to stretch forces in the membrane lipid bilayer. May participate in the regulation of osmotic pressure changes within the cell.</text>
</comment>
<comment type="subunit">
    <text evidence="1">Homopentamer.</text>
</comment>
<comment type="subcellular location">
    <subcellularLocation>
        <location evidence="1">Cell inner membrane</location>
        <topology evidence="1">Multi-pass membrane protein</topology>
    </subcellularLocation>
</comment>
<comment type="similarity">
    <text evidence="1">Belongs to the MscL family.</text>
</comment>
<protein>
    <recommendedName>
        <fullName evidence="1">Large-conductance mechanosensitive channel</fullName>
    </recommendedName>
</protein>
<feature type="chain" id="PRO_0000238011" description="Large-conductance mechanosensitive channel">
    <location>
        <begin position="1"/>
        <end position="127"/>
    </location>
</feature>
<feature type="transmembrane region" description="Helical" evidence="1">
    <location>
        <begin position="9"/>
        <end position="29"/>
    </location>
</feature>
<feature type="transmembrane region" description="Helical" evidence="1">
    <location>
        <begin position="32"/>
        <end position="52"/>
    </location>
</feature>
<feature type="transmembrane region" description="Helical" evidence="1">
    <location>
        <begin position="75"/>
        <end position="95"/>
    </location>
</feature>
<gene>
    <name evidence="1" type="primary">mscL</name>
    <name type="ordered locus">lpg2540</name>
</gene>
<organism>
    <name type="scientific">Legionella pneumophila subsp. pneumophila (strain Philadelphia 1 / ATCC 33152 / DSM 7513)</name>
    <dbReference type="NCBI Taxonomy" id="272624"/>
    <lineage>
        <taxon>Bacteria</taxon>
        <taxon>Pseudomonadati</taxon>
        <taxon>Pseudomonadota</taxon>
        <taxon>Gammaproteobacteria</taxon>
        <taxon>Legionellales</taxon>
        <taxon>Legionellaceae</taxon>
        <taxon>Legionella</taxon>
    </lineage>
</organism>
<proteinExistence type="inferred from homology"/>
<dbReference type="EMBL" id="AE017354">
    <property type="protein sequence ID" value="AAU28600.1"/>
    <property type="molecule type" value="Genomic_DNA"/>
</dbReference>
<dbReference type="RefSeq" id="WP_010948242.1">
    <property type="nucleotide sequence ID" value="NC_002942.5"/>
</dbReference>
<dbReference type="RefSeq" id="YP_096547.1">
    <property type="nucleotide sequence ID" value="NC_002942.5"/>
</dbReference>
<dbReference type="SMR" id="Q5ZSH7"/>
<dbReference type="STRING" id="272624.lpg2540"/>
<dbReference type="PaxDb" id="272624-lpg2540"/>
<dbReference type="GeneID" id="57036539"/>
<dbReference type="KEGG" id="lpn:lpg2540"/>
<dbReference type="PATRIC" id="fig|272624.6.peg.2702"/>
<dbReference type="eggNOG" id="COG1970">
    <property type="taxonomic scope" value="Bacteria"/>
</dbReference>
<dbReference type="HOGENOM" id="CLU_095787_0_0_6"/>
<dbReference type="OrthoDB" id="9810350at2"/>
<dbReference type="Proteomes" id="UP000000609">
    <property type="component" value="Chromosome"/>
</dbReference>
<dbReference type="GO" id="GO:0005886">
    <property type="term" value="C:plasma membrane"/>
    <property type="evidence" value="ECO:0007669"/>
    <property type="project" value="UniProtKB-SubCell"/>
</dbReference>
<dbReference type="GO" id="GO:0008381">
    <property type="term" value="F:mechanosensitive monoatomic ion channel activity"/>
    <property type="evidence" value="ECO:0007669"/>
    <property type="project" value="UniProtKB-UniRule"/>
</dbReference>
<dbReference type="Gene3D" id="1.10.1200.120">
    <property type="entry name" value="Large-conductance mechanosensitive channel, MscL, domain 1"/>
    <property type="match status" value="1"/>
</dbReference>
<dbReference type="HAMAP" id="MF_00115">
    <property type="entry name" value="MscL"/>
    <property type="match status" value="1"/>
</dbReference>
<dbReference type="InterPro" id="IPR019823">
    <property type="entry name" value="Mechanosensitive_channel_CS"/>
</dbReference>
<dbReference type="InterPro" id="IPR001185">
    <property type="entry name" value="MS_channel"/>
</dbReference>
<dbReference type="InterPro" id="IPR037673">
    <property type="entry name" value="MSC/AndL"/>
</dbReference>
<dbReference type="InterPro" id="IPR036019">
    <property type="entry name" value="MscL_channel"/>
</dbReference>
<dbReference type="NCBIfam" id="TIGR00220">
    <property type="entry name" value="mscL"/>
    <property type="match status" value="1"/>
</dbReference>
<dbReference type="NCBIfam" id="NF001843">
    <property type="entry name" value="PRK00567.1-4"/>
    <property type="match status" value="1"/>
</dbReference>
<dbReference type="PANTHER" id="PTHR30266:SF2">
    <property type="entry name" value="LARGE-CONDUCTANCE MECHANOSENSITIVE CHANNEL"/>
    <property type="match status" value="1"/>
</dbReference>
<dbReference type="PANTHER" id="PTHR30266">
    <property type="entry name" value="MECHANOSENSITIVE CHANNEL MSCL"/>
    <property type="match status" value="1"/>
</dbReference>
<dbReference type="Pfam" id="PF01741">
    <property type="entry name" value="MscL"/>
    <property type="match status" value="1"/>
</dbReference>
<dbReference type="PRINTS" id="PR01264">
    <property type="entry name" value="MECHCHANNEL"/>
</dbReference>
<dbReference type="SUPFAM" id="SSF81330">
    <property type="entry name" value="Gated mechanosensitive channel"/>
    <property type="match status" value="1"/>
</dbReference>
<dbReference type="PROSITE" id="PS01327">
    <property type="entry name" value="MSCL"/>
    <property type="match status" value="1"/>
</dbReference>
<keyword id="KW-0997">Cell inner membrane</keyword>
<keyword id="KW-1003">Cell membrane</keyword>
<keyword id="KW-0407">Ion channel</keyword>
<keyword id="KW-0406">Ion transport</keyword>
<keyword id="KW-0472">Membrane</keyword>
<keyword id="KW-1185">Reference proteome</keyword>
<keyword id="KW-0812">Transmembrane</keyword>
<keyword id="KW-1133">Transmembrane helix</keyword>
<keyword id="KW-0813">Transport</keyword>
<sequence>MSLLKEFKEFAMRGNVMDLAVAVVMGVAFNKIVTALVDGIIMPCVGLLLGGINIAGLSFTVGDVQIKWGNFLQNVIDFIIVAFAIFVLIKLINLLQRKKANEPEPVTPEIQLLTEIRDLLARNSSKI</sequence>
<reference key="1">
    <citation type="journal article" date="2004" name="Science">
        <title>The genomic sequence of the accidental pathogen Legionella pneumophila.</title>
        <authorList>
            <person name="Chien M."/>
            <person name="Morozova I."/>
            <person name="Shi S."/>
            <person name="Sheng H."/>
            <person name="Chen J."/>
            <person name="Gomez S.M."/>
            <person name="Asamani G."/>
            <person name="Hill K."/>
            <person name="Nuara J."/>
            <person name="Feder M."/>
            <person name="Rineer J."/>
            <person name="Greenberg J.J."/>
            <person name="Steshenko V."/>
            <person name="Park S.H."/>
            <person name="Zhao B."/>
            <person name="Teplitskaya E."/>
            <person name="Edwards J.R."/>
            <person name="Pampou S."/>
            <person name="Georghiou A."/>
            <person name="Chou I.-C."/>
            <person name="Iannuccilli W."/>
            <person name="Ulz M.E."/>
            <person name="Kim D.H."/>
            <person name="Geringer-Sameth A."/>
            <person name="Goldsberry C."/>
            <person name="Morozov P."/>
            <person name="Fischer S.G."/>
            <person name="Segal G."/>
            <person name="Qu X."/>
            <person name="Rzhetsky A."/>
            <person name="Zhang P."/>
            <person name="Cayanis E."/>
            <person name="De Jong P.J."/>
            <person name="Ju J."/>
            <person name="Kalachikov S."/>
            <person name="Shuman H.A."/>
            <person name="Russo J.J."/>
        </authorList>
    </citation>
    <scope>NUCLEOTIDE SEQUENCE [LARGE SCALE GENOMIC DNA]</scope>
    <source>
        <strain>Philadelphia 1 / ATCC 33152 / DSM 7513</strain>
    </source>
</reference>
<name>MSCL_LEGPH</name>
<accession>Q5ZSH7</accession>